<organism>
    <name type="scientific">Rattus norvegicus</name>
    <name type="common">Rat</name>
    <dbReference type="NCBI Taxonomy" id="10116"/>
    <lineage>
        <taxon>Eukaryota</taxon>
        <taxon>Metazoa</taxon>
        <taxon>Chordata</taxon>
        <taxon>Craniata</taxon>
        <taxon>Vertebrata</taxon>
        <taxon>Euteleostomi</taxon>
        <taxon>Mammalia</taxon>
        <taxon>Eutheria</taxon>
        <taxon>Euarchontoglires</taxon>
        <taxon>Glires</taxon>
        <taxon>Rodentia</taxon>
        <taxon>Myomorpha</taxon>
        <taxon>Muroidea</taxon>
        <taxon>Muridae</taxon>
        <taxon>Murinae</taxon>
        <taxon>Rattus</taxon>
    </lineage>
</organism>
<feature type="chain" id="PRO_0000399831" description="Serine/threonine-protein kinase ULK3">
    <location>
        <begin position="1"/>
        <end position="472"/>
    </location>
</feature>
<feature type="domain" description="Protein kinase" evidence="3">
    <location>
        <begin position="14"/>
        <end position="270"/>
    </location>
</feature>
<feature type="domain" description="MIT 1">
    <location>
        <begin position="281"/>
        <end position="347"/>
    </location>
</feature>
<feature type="domain" description="MIT 2">
    <location>
        <begin position="376"/>
        <end position="444"/>
    </location>
</feature>
<feature type="active site" description="Proton acceptor" evidence="3 4">
    <location>
        <position position="137"/>
    </location>
</feature>
<feature type="binding site" evidence="3">
    <location>
        <begin position="20"/>
        <end position="28"/>
    </location>
    <ligand>
        <name>ATP</name>
        <dbReference type="ChEBI" id="CHEBI:30616"/>
    </ligand>
</feature>
<feature type="binding site" evidence="3">
    <location>
        <position position="44"/>
    </location>
    <ligand>
        <name>ATP</name>
        <dbReference type="ChEBI" id="CHEBI:30616"/>
    </ligand>
</feature>
<feature type="modified residue" description="Phosphoserine" evidence="2">
    <location>
        <position position="176"/>
    </location>
</feature>
<feature type="modified residue" description="Phosphoserine; by autocatalysis" evidence="2">
    <location>
        <position position="350"/>
    </location>
</feature>
<feature type="modified residue" description="Phosphoserine; by autocatalysis" evidence="2">
    <location>
        <position position="384"/>
    </location>
</feature>
<feature type="modified residue" description="Phosphoserine" evidence="5">
    <location>
        <position position="464"/>
    </location>
</feature>
<gene>
    <name type="primary">Ulk3</name>
</gene>
<evidence type="ECO:0000250" key="1"/>
<evidence type="ECO:0000250" key="2">
    <source>
        <dbReference type="UniProtKB" id="Q6PHR2"/>
    </source>
</evidence>
<evidence type="ECO:0000255" key="3">
    <source>
        <dbReference type="PROSITE-ProRule" id="PRU00159"/>
    </source>
</evidence>
<evidence type="ECO:0000255" key="4">
    <source>
        <dbReference type="PROSITE-ProRule" id="PRU10027"/>
    </source>
</evidence>
<evidence type="ECO:0007744" key="5">
    <source>
    </source>
</evidence>
<comment type="function">
    <text evidence="1">Serine/threonine protein kinase that acts as a regulator of Sonic hedgehog (SHH) signaling and autophagy. Acts as a negative regulator of SHH signaling in the absence of SHH ligand: interacts with SUFU, thereby inactivating the protein kinase activity and preventing phosphorylation of GLI proteins (GLI1, GLI2 and/or GLI3). Positively regulates SHH signaling in the presence of SHH: dissociates from SUFU, autophosphorylates and mediates phosphorylation of GLI2, activating it and promoting its nuclear translocation. Phosphorylates in vitro GLI2, as well as GLI1 and GLI3, although less efficiently. Also acts as a regulator of autophagy: following cellular senescence, able to induce autophagy (By similarity).</text>
</comment>
<comment type="catalytic activity">
    <reaction>
        <text>L-seryl-[protein] + ATP = O-phospho-L-seryl-[protein] + ADP + H(+)</text>
        <dbReference type="Rhea" id="RHEA:17989"/>
        <dbReference type="Rhea" id="RHEA-COMP:9863"/>
        <dbReference type="Rhea" id="RHEA-COMP:11604"/>
        <dbReference type="ChEBI" id="CHEBI:15378"/>
        <dbReference type="ChEBI" id="CHEBI:29999"/>
        <dbReference type="ChEBI" id="CHEBI:30616"/>
        <dbReference type="ChEBI" id="CHEBI:83421"/>
        <dbReference type="ChEBI" id="CHEBI:456216"/>
        <dbReference type="EC" id="2.7.11.1"/>
    </reaction>
</comment>
<comment type="catalytic activity">
    <reaction>
        <text>L-threonyl-[protein] + ATP = O-phospho-L-threonyl-[protein] + ADP + H(+)</text>
        <dbReference type="Rhea" id="RHEA:46608"/>
        <dbReference type="Rhea" id="RHEA-COMP:11060"/>
        <dbReference type="Rhea" id="RHEA-COMP:11605"/>
        <dbReference type="ChEBI" id="CHEBI:15378"/>
        <dbReference type="ChEBI" id="CHEBI:30013"/>
        <dbReference type="ChEBI" id="CHEBI:30616"/>
        <dbReference type="ChEBI" id="CHEBI:61977"/>
        <dbReference type="ChEBI" id="CHEBI:456216"/>
        <dbReference type="EC" id="2.7.11.1"/>
    </reaction>
</comment>
<comment type="subunit">
    <text evidence="1">Interacts (via protein kinase domain) with SUFU.</text>
</comment>
<comment type="subcellular location">
    <subcellularLocation>
        <location evidence="1">Cytoplasm</location>
    </subcellularLocation>
    <text evidence="1">Localizes to pre-autophagosomal structure during cellular senescence.</text>
</comment>
<comment type="PTM">
    <text evidence="1">Autophosphorylated. Autophosphorylation is blocked by interaction with SUFU (By similarity).</text>
</comment>
<comment type="similarity">
    <text evidence="3">Belongs to the protein kinase superfamily. Ser/Thr protein kinase family. APG1/unc-51/ULK1 subfamily.</text>
</comment>
<keyword id="KW-0067">ATP-binding</keyword>
<keyword id="KW-0072">Autophagy</keyword>
<keyword id="KW-0963">Cytoplasm</keyword>
<keyword id="KW-0418">Kinase</keyword>
<keyword id="KW-0547">Nucleotide-binding</keyword>
<keyword id="KW-0597">Phosphoprotein</keyword>
<keyword id="KW-1185">Reference proteome</keyword>
<keyword id="KW-0677">Repeat</keyword>
<keyword id="KW-0723">Serine/threonine-protein kinase</keyword>
<keyword id="KW-0808">Transferase</keyword>
<name>ULK3_RAT</name>
<proteinExistence type="evidence at protein level"/>
<protein>
    <recommendedName>
        <fullName>Serine/threonine-protein kinase ULK3</fullName>
        <ecNumber>2.7.11.1</ecNumber>
    </recommendedName>
    <alternativeName>
        <fullName>Unc-51-like kinase 3</fullName>
    </alternativeName>
</protein>
<accession>D3ZHP7</accession>
<reference key="1">
    <citation type="submission" date="2005-07" db="EMBL/GenBank/DDBJ databases">
        <authorList>
            <person name="Mural R.J."/>
            <person name="Adams M.D."/>
            <person name="Myers E.W."/>
            <person name="Smith H.O."/>
            <person name="Venter J.C."/>
        </authorList>
    </citation>
    <scope>NUCLEOTIDE SEQUENCE [LARGE SCALE GENOMIC DNA]</scope>
</reference>
<reference key="2">
    <citation type="journal article" date="2012" name="Nat. Commun.">
        <title>Quantitative maps of protein phosphorylation sites across 14 different rat organs and tissues.</title>
        <authorList>
            <person name="Lundby A."/>
            <person name="Secher A."/>
            <person name="Lage K."/>
            <person name="Nordsborg N.B."/>
            <person name="Dmytriyev A."/>
            <person name="Lundby C."/>
            <person name="Olsen J.V."/>
        </authorList>
    </citation>
    <scope>PHOSPHORYLATION [LARGE SCALE ANALYSIS] AT SER-464</scope>
    <scope>IDENTIFICATION BY MASS SPECTROMETRY [LARGE SCALE ANALYSIS]</scope>
</reference>
<sequence>MAGSGWGLPRLDGFILTERLGSGTYATVYKAYAKKATREVVAIKCVAKKSLNKASVENLLTEIEILKGIRHPHIVQLKDFQWDNDNIYLIMEFCAGGDLSRFIHTRRILPEKVARVFMQQLASALQFLHERNISHLDLKPQNILLSSLEKPHLKLADFGFAQHMSPWDEKHVLRGSPLYMAPEMVCRRQYDARVDLWSVGVILYEALFGQPPFASRSFSELEEKIRSNRVIELPLRPQLSLDCRDLLQRLLERDPSHRISFQDFFAHPWVDLEHMPSGESLAQATALVVEAVKKDQEGDAAAALSLYCKALDFFVPALHYEVDAQRKEAIKAKVGQYVSRAEELKAIVSSSNQALLRQGTTGQELLREMARDKPRLLAALEVASAAMAKEEEAGKEQDALDLYQHSLGELLLLLAAEAPGRRRELLHTEVQNLMARAEYLKEQIKIRESHWEAESLDKEGLSESVRSSCTLQ</sequence>
<dbReference type="EC" id="2.7.11.1"/>
<dbReference type="EMBL" id="CH473975">
    <property type="protein sequence ID" value="EDL95639.1"/>
    <property type="molecule type" value="Genomic_DNA"/>
</dbReference>
<dbReference type="RefSeq" id="NP_001258064.1">
    <property type="nucleotide sequence ID" value="NM_001271135.1"/>
</dbReference>
<dbReference type="SMR" id="D3ZHP7"/>
<dbReference type="FunCoup" id="D3ZHP7">
    <property type="interactions" value="2348"/>
</dbReference>
<dbReference type="STRING" id="10116.ENSRNOP00000025885"/>
<dbReference type="iPTMnet" id="D3ZHP7"/>
<dbReference type="PhosphoSitePlus" id="D3ZHP7"/>
<dbReference type="jPOST" id="D3ZHP7"/>
<dbReference type="PaxDb" id="10116-ENSRNOP00000025885"/>
<dbReference type="Ensembl" id="ENSRNOT00000025885.5">
    <property type="protein sequence ID" value="ENSRNOP00000025885.2"/>
    <property type="gene ID" value="ENSRNOG00000038459.5"/>
</dbReference>
<dbReference type="GeneID" id="691171"/>
<dbReference type="KEGG" id="rno:691171"/>
<dbReference type="UCSC" id="RGD:1587417">
    <property type="organism name" value="rat"/>
</dbReference>
<dbReference type="AGR" id="RGD:1587417"/>
<dbReference type="CTD" id="25989"/>
<dbReference type="RGD" id="1587417">
    <property type="gene designation" value="Ulk3"/>
</dbReference>
<dbReference type="eggNOG" id="KOG0595">
    <property type="taxonomic scope" value="Eukaryota"/>
</dbReference>
<dbReference type="GeneTree" id="ENSGT00940000157689"/>
<dbReference type="HOGENOM" id="CLU_000288_63_58_1"/>
<dbReference type="InParanoid" id="D3ZHP7"/>
<dbReference type="OMA" id="TQAVEHD"/>
<dbReference type="OrthoDB" id="346907at2759"/>
<dbReference type="PhylomeDB" id="D3ZHP7"/>
<dbReference type="TreeFam" id="TF324551"/>
<dbReference type="Reactome" id="R-RNO-5632684">
    <property type="pathway name" value="Hedgehog 'on' state"/>
</dbReference>
<dbReference type="PRO" id="PR:D3ZHP7"/>
<dbReference type="Proteomes" id="UP000002494">
    <property type="component" value="Chromosome 8"/>
</dbReference>
<dbReference type="Proteomes" id="UP000234681">
    <property type="component" value="Chromosome 8"/>
</dbReference>
<dbReference type="Bgee" id="ENSRNOG00000038459">
    <property type="expression patterns" value="Expressed in thymus and 19 other cell types or tissues"/>
</dbReference>
<dbReference type="GO" id="GO:0005776">
    <property type="term" value="C:autophagosome"/>
    <property type="evidence" value="ECO:0000318"/>
    <property type="project" value="GO_Central"/>
</dbReference>
<dbReference type="GO" id="GO:0005737">
    <property type="term" value="C:cytoplasm"/>
    <property type="evidence" value="ECO:0000250"/>
    <property type="project" value="UniProtKB"/>
</dbReference>
<dbReference type="GO" id="GO:0005829">
    <property type="term" value="C:cytosol"/>
    <property type="evidence" value="ECO:0000318"/>
    <property type="project" value="GO_Central"/>
</dbReference>
<dbReference type="GO" id="GO:0000407">
    <property type="term" value="C:phagophore assembly site"/>
    <property type="evidence" value="ECO:0000318"/>
    <property type="project" value="GO_Central"/>
</dbReference>
<dbReference type="GO" id="GO:0034045">
    <property type="term" value="C:phagophore assembly site membrane"/>
    <property type="evidence" value="ECO:0000318"/>
    <property type="project" value="GO_Central"/>
</dbReference>
<dbReference type="GO" id="GO:0005524">
    <property type="term" value="F:ATP binding"/>
    <property type="evidence" value="ECO:0007669"/>
    <property type="project" value="UniProtKB-KW"/>
</dbReference>
<dbReference type="GO" id="GO:0106310">
    <property type="term" value="F:protein serine kinase activity"/>
    <property type="evidence" value="ECO:0007669"/>
    <property type="project" value="RHEA"/>
</dbReference>
<dbReference type="GO" id="GO:0004674">
    <property type="term" value="F:protein serine/threonine kinase activity"/>
    <property type="evidence" value="ECO:0000250"/>
    <property type="project" value="UniProtKB"/>
</dbReference>
<dbReference type="GO" id="GO:0000045">
    <property type="term" value="P:autophagosome assembly"/>
    <property type="evidence" value="ECO:0000318"/>
    <property type="project" value="GO_Central"/>
</dbReference>
<dbReference type="GO" id="GO:0072537">
    <property type="term" value="P:fibroblast activation"/>
    <property type="evidence" value="ECO:0000266"/>
    <property type="project" value="RGD"/>
</dbReference>
<dbReference type="GO" id="GO:0000423">
    <property type="term" value="P:mitophagy"/>
    <property type="evidence" value="ECO:0000318"/>
    <property type="project" value="GO_Central"/>
</dbReference>
<dbReference type="GO" id="GO:0045879">
    <property type="term" value="P:negative regulation of smoothened signaling pathway"/>
    <property type="evidence" value="ECO:0000250"/>
    <property type="project" value="UniProtKB"/>
</dbReference>
<dbReference type="GO" id="GO:0034727">
    <property type="term" value="P:piecemeal microautophagy of the nucleus"/>
    <property type="evidence" value="ECO:0000318"/>
    <property type="project" value="GO_Central"/>
</dbReference>
<dbReference type="GO" id="GO:0045880">
    <property type="term" value="P:positive regulation of smoothened signaling pathway"/>
    <property type="evidence" value="ECO:0000250"/>
    <property type="project" value="UniProtKB"/>
</dbReference>
<dbReference type="GO" id="GO:0046777">
    <property type="term" value="P:protein autophosphorylation"/>
    <property type="evidence" value="ECO:0000250"/>
    <property type="project" value="UniProtKB"/>
</dbReference>
<dbReference type="GO" id="GO:0010506">
    <property type="term" value="P:regulation of autophagy"/>
    <property type="evidence" value="ECO:0000318"/>
    <property type="project" value="GO_Central"/>
</dbReference>
<dbReference type="GO" id="GO:0042594">
    <property type="term" value="P:response to starvation"/>
    <property type="evidence" value="ECO:0000318"/>
    <property type="project" value="GO_Central"/>
</dbReference>
<dbReference type="GO" id="GO:0061709">
    <property type="term" value="P:reticulophagy"/>
    <property type="evidence" value="ECO:0000318"/>
    <property type="project" value="GO_Central"/>
</dbReference>
<dbReference type="GO" id="GO:0007224">
    <property type="term" value="P:smoothened signaling pathway"/>
    <property type="evidence" value="ECO:0000266"/>
    <property type="project" value="RGD"/>
</dbReference>
<dbReference type="CDD" id="cd02684">
    <property type="entry name" value="MIT_2"/>
    <property type="match status" value="1"/>
</dbReference>
<dbReference type="CDD" id="cd14121">
    <property type="entry name" value="STKc_ULK3"/>
    <property type="match status" value="1"/>
</dbReference>
<dbReference type="FunFam" id="1.10.510.10:FF:000241">
    <property type="entry name" value="Putative serine/threonine-protein kinase ULK3"/>
    <property type="match status" value="1"/>
</dbReference>
<dbReference type="FunFam" id="3.30.200.20:FF:000238">
    <property type="entry name" value="Putative serine/threonine-protein kinase ULK3"/>
    <property type="match status" value="1"/>
</dbReference>
<dbReference type="FunFam" id="1.20.58.80:FF:000008">
    <property type="entry name" value="serine/threonine-protein kinase ULK3 isoform X1"/>
    <property type="match status" value="1"/>
</dbReference>
<dbReference type="FunFam" id="1.20.58.80:FF:000010">
    <property type="entry name" value="serine/threonine-protein kinase ULK3 isoform X1"/>
    <property type="match status" value="1"/>
</dbReference>
<dbReference type="Gene3D" id="3.30.200.20">
    <property type="entry name" value="Phosphorylase Kinase, domain 1"/>
    <property type="match status" value="1"/>
</dbReference>
<dbReference type="Gene3D" id="1.20.58.80">
    <property type="entry name" value="Phosphotransferase system, lactose/cellobiose-type IIA subunit"/>
    <property type="match status" value="2"/>
</dbReference>
<dbReference type="Gene3D" id="1.10.510.10">
    <property type="entry name" value="Transferase(Phosphotransferase) domain 1"/>
    <property type="match status" value="1"/>
</dbReference>
<dbReference type="InterPro" id="IPR045269">
    <property type="entry name" value="Atg1-like"/>
</dbReference>
<dbReference type="InterPro" id="IPR011009">
    <property type="entry name" value="Kinase-like_dom_sf"/>
</dbReference>
<dbReference type="InterPro" id="IPR007330">
    <property type="entry name" value="MIT_dom"/>
</dbReference>
<dbReference type="InterPro" id="IPR036181">
    <property type="entry name" value="MIT_dom_sf"/>
</dbReference>
<dbReference type="InterPro" id="IPR000719">
    <property type="entry name" value="Prot_kinase_dom"/>
</dbReference>
<dbReference type="InterPro" id="IPR017441">
    <property type="entry name" value="Protein_kinase_ATP_BS"/>
</dbReference>
<dbReference type="InterPro" id="IPR008271">
    <property type="entry name" value="Ser/Thr_kinase_AS"/>
</dbReference>
<dbReference type="PANTHER" id="PTHR24348">
    <property type="entry name" value="SERINE/THREONINE-PROTEIN KINASE UNC-51-RELATED"/>
    <property type="match status" value="1"/>
</dbReference>
<dbReference type="PANTHER" id="PTHR24348:SF65">
    <property type="entry name" value="SERINE_THREONINE-PROTEIN KINASE ULK3"/>
    <property type="match status" value="1"/>
</dbReference>
<dbReference type="Pfam" id="PF04212">
    <property type="entry name" value="MIT"/>
    <property type="match status" value="2"/>
</dbReference>
<dbReference type="Pfam" id="PF00069">
    <property type="entry name" value="Pkinase"/>
    <property type="match status" value="1"/>
</dbReference>
<dbReference type="SMART" id="SM00745">
    <property type="entry name" value="MIT"/>
    <property type="match status" value="2"/>
</dbReference>
<dbReference type="SMART" id="SM00220">
    <property type="entry name" value="S_TKc"/>
    <property type="match status" value="1"/>
</dbReference>
<dbReference type="SUPFAM" id="SSF116846">
    <property type="entry name" value="MIT domain"/>
    <property type="match status" value="2"/>
</dbReference>
<dbReference type="SUPFAM" id="SSF56112">
    <property type="entry name" value="Protein kinase-like (PK-like)"/>
    <property type="match status" value="1"/>
</dbReference>
<dbReference type="PROSITE" id="PS00107">
    <property type="entry name" value="PROTEIN_KINASE_ATP"/>
    <property type="match status" value="1"/>
</dbReference>
<dbReference type="PROSITE" id="PS50011">
    <property type="entry name" value="PROTEIN_KINASE_DOM"/>
    <property type="match status" value="1"/>
</dbReference>
<dbReference type="PROSITE" id="PS00108">
    <property type="entry name" value="PROTEIN_KINASE_ST"/>
    <property type="match status" value="1"/>
</dbReference>